<name>ILVD_LACLA</name>
<evidence type="ECO:0000255" key="1">
    <source>
        <dbReference type="HAMAP-Rule" id="MF_00012"/>
    </source>
</evidence>
<evidence type="ECO:0000305" key="2"/>
<dbReference type="EC" id="4.2.1.9" evidence="1"/>
<dbReference type="EMBL" id="U92974">
    <property type="protein sequence ID" value="AAB81918.1"/>
    <property type="molecule type" value="Genomic_DNA"/>
</dbReference>
<dbReference type="EMBL" id="AE005176">
    <property type="protein sequence ID" value="AAK05321.1"/>
    <property type="molecule type" value="Genomic_DNA"/>
</dbReference>
<dbReference type="PIR" id="G86777">
    <property type="entry name" value="G86777"/>
</dbReference>
<dbReference type="PIR" id="S35137">
    <property type="entry name" value="S35137"/>
</dbReference>
<dbReference type="RefSeq" id="NP_267379.1">
    <property type="nucleotide sequence ID" value="NC_002662.1"/>
</dbReference>
<dbReference type="RefSeq" id="WP_010905837.1">
    <property type="nucleotide sequence ID" value="NC_002662.1"/>
</dbReference>
<dbReference type="SMR" id="Q02139"/>
<dbReference type="PaxDb" id="272623-L0077"/>
<dbReference type="EnsemblBacteria" id="AAK05321">
    <property type="protein sequence ID" value="AAK05321"/>
    <property type="gene ID" value="L0077"/>
</dbReference>
<dbReference type="KEGG" id="lla:L0077"/>
<dbReference type="PATRIC" id="fig|272623.7.peg.1322"/>
<dbReference type="eggNOG" id="COG0129">
    <property type="taxonomic scope" value="Bacteria"/>
</dbReference>
<dbReference type="HOGENOM" id="CLU_014271_4_1_9"/>
<dbReference type="OrthoDB" id="9807077at2"/>
<dbReference type="UniPathway" id="UPA00047">
    <property type="reaction ID" value="UER00057"/>
</dbReference>
<dbReference type="UniPathway" id="UPA00049">
    <property type="reaction ID" value="UER00061"/>
</dbReference>
<dbReference type="Proteomes" id="UP000002196">
    <property type="component" value="Chromosome"/>
</dbReference>
<dbReference type="GO" id="GO:0051537">
    <property type="term" value="F:2 iron, 2 sulfur cluster binding"/>
    <property type="evidence" value="ECO:0007669"/>
    <property type="project" value="UniProtKB-UniRule"/>
</dbReference>
<dbReference type="GO" id="GO:0004160">
    <property type="term" value="F:dihydroxy-acid dehydratase activity"/>
    <property type="evidence" value="ECO:0007669"/>
    <property type="project" value="UniProtKB-UniRule"/>
</dbReference>
<dbReference type="GO" id="GO:0000287">
    <property type="term" value="F:magnesium ion binding"/>
    <property type="evidence" value="ECO:0007669"/>
    <property type="project" value="UniProtKB-UniRule"/>
</dbReference>
<dbReference type="GO" id="GO:0009097">
    <property type="term" value="P:isoleucine biosynthetic process"/>
    <property type="evidence" value="ECO:0007669"/>
    <property type="project" value="UniProtKB-UniRule"/>
</dbReference>
<dbReference type="GO" id="GO:0009099">
    <property type="term" value="P:L-valine biosynthetic process"/>
    <property type="evidence" value="ECO:0007669"/>
    <property type="project" value="UniProtKB-UniRule"/>
</dbReference>
<dbReference type="FunFam" id="3.50.30.80:FF:000001">
    <property type="entry name" value="Dihydroxy-acid dehydratase"/>
    <property type="match status" value="1"/>
</dbReference>
<dbReference type="Gene3D" id="3.50.30.80">
    <property type="entry name" value="IlvD/EDD C-terminal domain-like"/>
    <property type="match status" value="1"/>
</dbReference>
<dbReference type="HAMAP" id="MF_00012">
    <property type="entry name" value="IlvD"/>
    <property type="match status" value="1"/>
</dbReference>
<dbReference type="InterPro" id="IPR050165">
    <property type="entry name" value="DHAD_IlvD/Edd"/>
</dbReference>
<dbReference type="InterPro" id="IPR042096">
    <property type="entry name" value="Dihydro-acid_dehy_C"/>
</dbReference>
<dbReference type="InterPro" id="IPR004404">
    <property type="entry name" value="DihydroxyA_deHydtase"/>
</dbReference>
<dbReference type="InterPro" id="IPR020558">
    <property type="entry name" value="DiOHA_6PGluconate_deHydtase_CS"/>
</dbReference>
<dbReference type="InterPro" id="IPR056740">
    <property type="entry name" value="ILV_EDD_C"/>
</dbReference>
<dbReference type="InterPro" id="IPR000581">
    <property type="entry name" value="ILV_EDD_N"/>
</dbReference>
<dbReference type="InterPro" id="IPR037237">
    <property type="entry name" value="IlvD/EDD_N"/>
</dbReference>
<dbReference type="NCBIfam" id="TIGR00110">
    <property type="entry name" value="ilvD"/>
    <property type="match status" value="1"/>
</dbReference>
<dbReference type="NCBIfam" id="NF002068">
    <property type="entry name" value="PRK00911.1"/>
    <property type="match status" value="1"/>
</dbReference>
<dbReference type="PANTHER" id="PTHR21000">
    <property type="entry name" value="DIHYDROXY-ACID DEHYDRATASE DAD"/>
    <property type="match status" value="1"/>
</dbReference>
<dbReference type="PANTHER" id="PTHR21000:SF5">
    <property type="entry name" value="DIHYDROXY-ACID DEHYDRATASE, MITOCHONDRIAL"/>
    <property type="match status" value="1"/>
</dbReference>
<dbReference type="Pfam" id="PF24877">
    <property type="entry name" value="ILV_EDD_C"/>
    <property type="match status" value="1"/>
</dbReference>
<dbReference type="Pfam" id="PF00920">
    <property type="entry name" value="ILVD_EDD_N"/>
    <property type="match status" value="1"/>
</dbReference>
<dbReference type="SUPFAM" id="SSF143975">
    <property type="entry name" value="IlvD/EDD N-terminal domain-like"/>
    <property type="match status" value="1"/>
</dbReference>
<dbReference type="SUPFAM" id="SSF52016">
    <property type="entry name" value="LeuD/IlvD-like"/>
    <property type="match status" value="1"/>
</dbReference>
<dbReference type="PROSITE" id="PS00886">
    <property type="entry name" value="ILVD_EDD_1"/>
    <property type="match status" value="1"/>
</dbReference>
<dbReference type="PROSITE" id="PS00887">
    <property type="entry name" value="ILVD_EDD_2"/>
    <property type="match status" value="1"/>
</dbReference>
<comment type="function">
    <text evidence="1">Functions in the biosynthesis of branched-chain amino acids. Catalyzes the dehydration of (2R,3R)-2,3-dihydroxy-3-methylpentanoate (2,3-dihydroxy-3-methylvalerate) into 2-oxo-3-methylpentanoate (2-oxo-3-methylvalerate) and of (2R)-2,3-dihydroxy-3-methylbutanoate (2,3-dihydroxyisovalerate) into 2-oxo-3-methylbutanoate (2-oxoisovalerate), the penultimate precursor to L-isoleucine and L-valine, respectively.</text>
</comment>
<comment type="catalytic activity">
    <reaction evidence="1">
        <text>(2R)-2,3-dihydroxy-3-methylbutanoate = 3-methyl-2-oxobutanoate + H2O</text>
        <dbReference type="Rhea" id="RHEA:24809"/>
        <dbReference type="ChEBI" id="CHEBI:11851"/>
        <dbReference type="ChEBI" id="CHEBI:15377"/>
        <dbReference type="ChEBI" id="CHEBI:49072"/>
        <dbReference type="EC" id="4.2.1.9"/>
    </reaction>
    <physiologicalReaction direction="left-to-right" evidence="1">
        <dbReference type="Rhea" id="RHEA:24810"/>
    </physiologicalReaction>
</comment>
<comment type="catalytic activity">
    <reaction evidence="1">
        <text>(2R,3R)-2,3-dihydroxy-3-methylpentanoate = (S)-3-methyl-2-oxopentanoate + H2O</text>
        <dbReference type="Rhea" id="RHEA:27694"/>
        <dbReference type="ChEBI" id="CHEBI:15377"/>
        <dbReference type="ChEBI" id="CHEBI:35146"/>
        <dbReference type="ChEBI" id="CHEBI:49258"/>
        <dbReference type="EC" id="4.2.1.9"/>
    </reaction>
    <physiologicalReaction direction="left-to-right" evidence="1">
        <dbReference type="Rhea" id="RHEA:27695"/>
    </physiologicalReaction>
</comment>
<comment type="cofactor">
    <cofactor evidence="1">
        <name>[2Fe-2S] cluster</name>
        <dbReference type="ChEBI" id="CHEBI:190135"/>
    </cofactor>
    <text evidence="1">Binds 1 [2Fe-2S] cluster per subunit. This cluster acts as a Lewis acid cofactor.</text>
</comment>
<comment type="cofactor">
    <cofactor evidence="1">
        <name>Mg(2+)</name>
        <dbReference type="ChEBI" id="CHEBI:18420"/>
    </cofactor>
</comment>
<comment type="pathway">
    <text evidence="1">Amino-acid biosynthesis; L-isoleucine biosynthesis; L-isoleucine from 2-oxobutanoate: step 3/4.</text>
</comment>
<comment type="pathway">
    <text evidence="1">Amino-acid biosynthesis; L-valine biosynthesis; L-valine from pyruvate: step 3/4.</text>
</comment>
<comment type="subunit">
    <text evidence="1">Homodimer.</text>
</comment>
<comment type="similarity">
    <text evidence="1">Belongs to the IlvD/Edd family.</text>
</comment>
<sequence length="570" mass="60737">MEFKYNGKVESVELNKYSKTLTQDPTQPATQAMYYGIGFKDEDFKKAQVGIVSMDWDGNPCNMHLGTLGSKIKSSVNQTDGLIGLQFHTIGVSDGIANGKLGMRYSLVSREVIADSIETNAGAEYYDAIVAIPGCDKNMPGSIIGMARLNRPSIMVYGGTIEHGEYKGEKLNIVSAFESLGQKITGNISDEDYHGVICNAIPGQGACGGMYTANTLAAAIETLGMSLPYSSSNPAVSQEKQEECDEIGLAIKNLLEKDIKPSDIMTKEAFENAITIVMVLGGSTNAVLHIIAMANAIGVEITQDDFQRISDITPVLGDFKPSGKYMMEDLHKIGGLPAVLKYLLKEGKLHGDCLTVTGKTLAENVETALDLDFDSQDIMRPLKNPIKATGHLQILYGNLAQGGSVAKISGKEGEFFKGTARVFDGEQHFIDGIESGRLHAGDVAVIRNIGPVGGPGMPEMLKPTSALIGAGLGKSCALITDGRFSGGTHGFVVGHIVPEAVEGGLIGLVEDDDIIEIDAVNNSISLKVSDEEIAKRRANYQKPTPKATRGVLAKFAKLTRPASEGCVTDL</sequence>
<organism>
    <name type="scientific">Lactococcus lactis subsp. lactis (strain IL1403)</name>
    <name type="common">Streptococcus lactis</name>
    <dbReference type="NCBI Taxonomy" id="272623"/>
    <lineage>
        <taxon>Bacteria</taxon>
        <taxon>Bacillati</taxon>
        <taxon>Bacillota</taxon>
        <taxon>Bacilli</taxon>
        <taxon>Lactobacillales</taxon>
        <taxon>Streptococcaceae</taxon>
        <taxon>Lactococcus</taxon>
    </lineage>
</organism>
<reference key="1">
    <citation type="journal article" date="1992" name="J. Bacteriol.">
        <title>Branched-chain amino acid biosynthesis genes in Lactococcus lactis subsp. lactis.</title>
        <authorList>
            <person name="Godon J.-J."/>
            <person name="Chopin M.-C."/>
            <person name="Ehrlich S.D."/>
        </authorList>
    </citation>
    <scope>NUCLEOTIDE SEQUENCE [GENOMIC DNA]</scope>
    <source>
        <strain>NCDO 2118</strain>
    </source>
</reference>
<reference key="2">
    <citation type="journal article" date="2001" name="Genome Res.">
        <title>The complete genome sequence of the lactic acid bacterium Lactococcus lactis ssp. lactis IL1403.</title>
        <authorList>
            <person name="Bolotin A."/>
            <person name="Wincker P."/>
            <person name="Mauger S."/>
            <person name="Jaillon O."/>
            <person name="Malarme K."/>
            <person name="Weissenbach J."/>
            <person name="Ehrlich S.D."/>
            <person name="Sorokin A."/>
        </authorList>
    </citation>
    <scope>NUCLEOTIDE SEQUENCE [LARGE SCALE GENOMIC DNA]</scope>
    <source>
        <strain>IL1403</strain>
    </source>
</reference>
<keyword id="KW-0001">2Fe-2S</keyword>
<keyword id="KW-0028">Amino-acid biosynthesis</keyword>
<keyword id="KW-0100">Branched-chain amino acid biosynthesis</keyword>
<keyword id="KW-0408">Iron</keyword>
<keyword id="KW-0411">Iron-sulfur</keyword>
<keyword id="KW-0456">Lyase</keyword>
<keyword id="KW-0460">Magnesium</keyword>
<keyword id="KW-0479">Metal-binding</keyword>
<keyword id="KW-1185">Reference proteome</keyword>
<feature type="chain" id="PRO_0000103472" description="Dihydroxy-acid dehydratase">
    <location>
        <begin position="1"/>
        <end position="570"/>
    </location>
</feature>
<feature type="active site" description="Proton acceptor" evidence="1">
    <location>
        <position position="485"/>
    </location>
</feature>
<feature type="binding site" evidence="1">
    <location>
        <position position="61"/>
    </location>
    <ligand>
        <name>[2Fe-2S] cluster</name>
        <dbReference type="ChEBI" id="CHEBI:190135"/>
    </ligand>
</feature>
<feature type="binding site" evidence="1">
    <location>
        <position position="94"/>
    </location>
    <ligand>
        <name>Mg(2+)</name>
        <dbReference type="ChEBI" id="CHEBI:18420"/>
    </ligand>
</feature>
<feature type="binding site" evidence="1">
    <location>
        <position position="135"/>
    </location>
    <ligand>
        <name>[2Fe-2S] cluster</name>
        <dbReference type="ChEBI" id="CHEBI:190135"/>
    </ligand>
</feature>
<feature type="binding site" evidence="1">
    <location>
        <position position="136"/>
    </location>
    <ligand>
        <name>Mg(2+)</name>
        <dbReference type="ChEBI" id="CHEBI:18420"/>
    </ligand>
</feature>
<feature type="binding site" description="via carbamate group" evidence="1">
    <location>
        <position position="137"/>
    </location>
    <ligand>
        <name>Mg(2+)</name>
        <dbReference type="ChEBI" id="CHEBI:18420"/>
    </ligand>
</feature>
<feature type="binding site" evidence="1">
    <location>
        <position position="207"/>
    </location>
    <ligand>
        <name>[2Fe-2S] cluster</name>
        <dbReference type="ChEBI" id="CHEBI:190135"/>
    </ligand>
</feature>
<feature type="binding site" evidence="1">
    <location>
        <position position="459"/>
    </location>
    <ligand>
        <name>Mg(2+)</name>
        <dbReference type="ChEBI" id="CHEBI:18420"/>
    </ligand>
</feature>
<feature type="modified residue" description="N6-carboxylysine" evidence="1">
    <location>
        <position position="137"/>
    </location>
</feature>
<feature type="sequence conflict" description="In Ref. 1; AAB81918." evidence="2" ref="1">
    <original>QDP</original>
    <variation>PRS</variation>
    <location>
        <begin position="23"/>
        <end position="25"/>
    </location>
</feature>
<feature type="sequence conflict" description="In Ref. 1; AAB81918." evidence="2" ref="1">
    <original>S</original>
    <variation>A</variation>
    <location>
        <position position="179"/>
    </location>
</feature>
<feature type="sequence conflict" description="In Ref. 1; AAB81918." evidence="2" ref="1">
    <original>E</original>
    <variation>D</variation>
    <location>
        <position position="246"/>
    </location>
</feature>
<feature type="sequence conflict" description="In Ref. 1; AAB81918." evidence="2" ref="1">
    <original>T</original>
    <variation>I</variation>
    <location>
        <position position="313"/>
    </location>
</feature>
<feature type="sequence conflict" description="In Ref. 1; AAB81918." evidence="2" ref="1">
    <original>D</original>
    <variation>N</variation>
    <location>
        <position position="530"/>
    </location>
</feature>
<accession>Q02139</accession>
<gene>
    <name evidence="1" type="primary">ilvD</name>
    <name type="ordered locus">LL1223</name>
    <name type="ORF">L0077</name>
</gene>
<protein>
    <recommendedName>
        <fullName evidence="1">Dihydroxy-acid dehydratase</fullName>
        <shortName evidence="1">DAD</shortName>
        <ecNumber evidence="1">4.2.1.9</ecNumber>
    </recommendedName>
</protein>
<proteinExistence type="inferred from homology"/>